<keyword id="KW-0963">Cytoplasm</keyword>
<keyword id="KW-0324">Glycolysis</keyword>
<keyword id="KW-0456">Lyase</keyword>
<keyword id="KW-0460">Magnesium</keyword>
<keyword id="KW-0479">Metal-binding</keyword>
<keyword id="KW-0964">Secreted</keyword>
<keyword id="KW-0843">Virulence</keyword>
<reference key="1">
    <citation type="journal article" date="2007" name="PLoS ONE">
        <title>Molecular correlates of host specialization in Staphylococcus aureus.</title>
        <authorList>
            <person name="Herron-Olson L."/>
            <person name="Fitzgerald J.R."/>
            <person name="Musser J.M."/>
            <person name="Kapur V."/>
        </authorList>
    </citation>
    <scope>NUCLEOTIDE SEQUENCE [LARGE SCALE GENOMIC DNA]</scope>
    <source>
        <strain>bovine RF122 / ET3-1</strain>
    </source>
</reference>
<accession>Q2YSE8</accession>
<proteinExistence type="inferred from homology"/>
<evidence type="ECO:0000255" key="1">
    <source>
        <dbReference type="HAMAP-Rule" id="MF_00318"/>
    </source>
</evidence>
<comment type="function">
    <text evidence="1">Catalyzes the reversible conversion of 2-phosphoglycerate (2-PG) into phosphoenolpyruvate (PEP). It is essential for the degradation of carbohydrates via glycolysis.</text>
</comment>
<comment type="catalytic activity">
    <reaction evidence="1">
        <text>(2R)-2-phosphoglycerate = phosphoenolpyruvate + H2O</text>
        <dbReference type="Rhea" id="RHEA:10164"/>
        <dbReference type="ChEBI" id="CHEBI:15377"/>
        <dbReference type="ChEBI" id="CHEBI:58289"/>
        <dbReference type="ChEBI" id="CHEBI:58702"/>
        <dbReference type="EC" id="4.2.1.11"/>
    </reaction>
</comment>
<comment type="cofactor">
    <cofactor evidence="1">
        <name>Mg(2+)</name>
        <dbReference type="ChEBI" id="CHEBI:18420"/>
    </cofactor>
    <text evidence="1">Binds a second Mg(2+) ion via substrate during catalysis.</text>
</comment>
<comment type="pathway">
    <text evidence="1">Carbohydrate degradation; glycolysis; pyruvate from D-glyceraldehyde 3-phosphate: step 4/5.</text>
</comment>
<comment type="subcellular location">
    <subcellularLocation>
        <location evidence="1">Cytoplasm</location>
    </subcellularLocation>
    <subcellularLocation>
        <location evidence="1">Secreted</location>
    </subcellularLocation>
    <subcellularLocation>
        <location evidence="1">Cell surface</location>
    </subcellularLocation>
    <text evidence="1">Fractions of enolase are present in both the cytoplasm and on the cell surface.</text>
</comment>
<comment type="similarity">
    <text evidence="1">Belongs to the enolase family.</text>
</comment>
<gene>
    <name evidence="1" type="primary">eno</name>
    <name type="ordered locus">SAB0732</name>
</gene>
<sequence>MPIITDVYAREVLDSRGNPTVEVEVLTESGAFGRALVPSGASTGEHEAVELRDGDKSRYLGKGVTKAVENVNEIIAPEIIEGEFSVLDQVSIDKMMIALDGTPNKGKLGANAILGVSIAVARAAADLLGQPLYKYLGGFNGKQLPVPMMNIVNGGSHSDAPIAFQEFMILPVGATTFKESLRWGTEIFHNLKSILSKRGLETAVGDEGGFAPKFEGTEDAVETIIQAIEAAGYKPGEEVFLGFDCASSEFYENGVYDYSKFEGEHGAKRTAAEQVDYLEQLVDKYPIITIEDGMDENDWDGWKQLTERIGDRVQLVGDDLFVTNTEILAKGIENGIGNSILIKVNQIGTLTETFDAIEMAQKAGYTAVVSHRSGETEDTTIADIAVATNAGQIKTGSLSRTDRIAKYNQLLRIEDELFETAKYDGIKSFYNLDK</sequence>
<dbReference type="EC" id="4.2.1.11" evidence="1"/>
<dbReference type="EMBL" id="AJ938182">
    <property type="protein sequence ID" value="CAI80420.1"/>
    <property type="molecule type" value="Genomic_DNA"/>
</dbReference>
<dbReference type="RefSeq" id="WP_001121760.1">
    <property type="nucleotide sequence ID" value="NC_007622.1"/>
</dbReference>
<dbReference type="SMR" id="Q2YSE8"/>
<dbReference type="KEGG" id="sab:SAB0732"/>
<dbReference type="HOGENOM" id="CLU_031223_2_1_9"/>
<dbReference type="UniPathway" id="UPA00109">
    <property type="reaction ID" value="UER00187"/>
</dbReference>
<dbReference type="GO" id="GO:0009986">
    <property type="term" value="C:cell surface"/>
    <property type="evidence" value="ECO:0007669"/>
    <property type="project" value="UniProtKB-SubCell"/>
</dbReference>
<dbReference type="GO" id="GO:0005576">
    <property type="term" value="C:extracellular region"/>
    <property type="evidence" value="ECO:0007669"/>
    <property type="project" value="UniProtKB-SubCell"/>
</dbReference>
<dbReference type="GO" id="GO:0000015">
    <property type="term" value="C:phosphopyruvate hydratase complex"/>
    <property type="evidence" value="ECO:0007669"/>
    <property type="project" value="InterPro"/>
</dbReference>
<dbReference type="GO" id="GO:0000287">
    <property type="term" value="F:magnesium ion binding"/>
    <property type="evidence" value="ECO:0007669"/>
    <property type="project" value="UniProtKB-UniRule"/>
</dbReference>
<dbReference type="GO" id="GO:0004634">
    <property type="term" value="F:phosphopyruvate hydratase activity"/>
    <property type="evidence" value="ECO:0007669"/>
    <property type="project" value="UniProtKB-UniRule"/>
</dbReference>
<dbReference type="GO" id="GO:0006096">
    <property type="term" value="P:glycolytic process"/>
    <property type="evidence" value="ECO:0007669"/>
    <property type="project" value="UniProtKB-UniRule"/>
</dbReference>
<dbReference type="CDD" id="cd03313">
    <property type="entry name" value="enolase"/>
    <property type="match status" value="1"/>
</dbReference>
<dbReference type="FunFam" id="3.20.20.120:FF:000001">
    <property type="entry name" value="Enolase"/>
    <property type="match status" value="1"/>
</dbReference>
<dbReference type="FunFam" id="3.30.390.10:FF:000001">
    <property type="entry name" value="Enolase"/>
    <property type="match status" value="1"/>
</dbReference>
<dbReference type="Gene3D" id="3.20.20.120">
    <property type="entry name" value="Enolase-like C-terminal domain"/>
    <property type="match status" value="1"/>
</dbReference>
<dbReference type="Gene3D" id="3.30.390.10">
    <property type="entry name" value="Enolase-like, N-terminal domain"/>
    <property type="match status" value="1"/>
</dbReference>
<dbReference type="HAMAP" id="MF_00318">
    <property type="entry name" value="Enolase"/>
    <property type="match status" value="1"/>
</dbReference>
<dbReference type="InterPro" id="IPR000941">
    <property type="entry name" value="Enolase"/>
</dbReference>
<dbReference type="InterPro" id="IPR036849">
    <property type="entry name" value="Enolase-like_C_sf"/>
</dbReference>
<dbReference type="InterPro" id="IPR029017">
    <property type="entry name" value="Enolase-like_N"/>
</dbReference>
<dbReference type="InterPro" id="IPR020810">
    <property type="entry name" value="Enolase_C"/>
</dbReference>
<dbReference type="InterPro" id="IPR020809">
    <property type="entry name" value="Enolase_CS"/>
</dbReference>
<dbReference type="InterPro" id="IPR020811">
    <property type="entry name" value="Enolase_N"/>
</dbReference>
<dbReference type="NCBIfam" id="TIGR01060">
    <property type="entry name" value="eno"/>
    <property type="match status" value="1"/>
</dbReference>
<dbReference type="PANTHER" id="PTHR11902">
    <property type="entry name" value="ENOLASE"/>
    <property type="match status" value="1"/>
</dbReference>
<dbReference type="PANTHER" id="PTHR11902:SF1">
    <property type="entry name" value="ENOLASE"/>
    <property type="match status" value="1"/>
</dbReference>
<dbReference type="Pfam" id="PF00113">
    <property type="entry name" value="Enolase_C"/>
    <property type="match status" value="1"/>
</dbReference>
<dbReference type="Pfam" id="PF03952">
    <property type="entry name" value="Enolase_N"/>
    <property type="match status" value="1"/>
</dbReference>
<dbReference type="PIRSF" id="PIRSF001400">
    <property type="entry name" value="Enolase"/>
    <property type="match status" value="1"/>
</dbReference>
<dbReference type="PRINTS" id="PR00148">
    <property type="entry name" value="ENOLASE"/>
</dbReference>
<dbReference type="SFLD" id="SFLDF00002">
    <property type="entry name" value="enolase"/>
    <property type="match status" value="1"/>
</dbReference>
<dbReference type="SFLD" id="SFLDG00178">
    <property type="entry name" value="enolase"/>
    <property type="match status" value="1"/>
</dbReference>
<dbReference type="SMART" id="SM01192">
    <property type="entry name" value="Enolase_C"/>
    <property type="match status" value="1"/>
</dbReference>
<dbReference type="SMART" id="SM01193">
    <property type="entry name" value="Enolase_N"/>
    <property type="match status" value="1"/>
</dbReference>
<dbReference type="SUPFAM" id="SSF51604">
    <property type="entry name" value="Enolase C-terminal domain-like"/>
    <property type="match status" value="1"/>
</dbReference>
<dbReference type="SUPFAM" id="SSF54826">
    <property type="entry name" value="Enolase N-terminal domain-like"/>
    <property type="match status" value="1"/>
</dbReference>
<dbReference type="PROSITE" id="PS00164">
    <property type="entry name" value="ENOLASE"/>
    <property type="match status" value="1"/>
</dbReference>
<feature type="chain" id="PRO_0000267110" description="Enolase">
    <location>
        <begin position="1"/>
        <end position="434"/>
    </location>
</feature>
<feature type="active site" description="Proton donor" evidence="1">
    <location>
        <position position="207"/>
    </location>
</feature>
<feature type="active site" description="Proton acceptor" evidence="1">
    <location>
        <position position="343"/>
    </location>
</feature>
<feature type="binding site" evidence="1">
    <location>
        <position position="165"/>
    </location>
    <ligand>
        <name>(2R)-2-phosphoglycerate</name>
        <dbReference type="ChEBI" id="CHEBI:58289"/>
    </ligand>
</feature>
<feature type="binding site" evidence="1">
    <location>
        <position position="244"/>
    </location>
    <ligand>
        <name>Mg(2+)</name>
        <dbReference type="ChEBI" id="CHEBI:18420"/>
    </ligand>
</feature>
<feature type="binding site" evidence="1">
    <location>
        <position position="291"/>
    </location>
    <ligand>
        <name>Mg(2+)</name>
        <dbReference type="ChEBI" id="CHEBI:18420"/>
    </ligand>
</feature>
<feature type="binding site" evidence="1">
    <location>
        <position position="318"/>
    </location>
    <ligand>
        <name>Mg(2+)</name>
        <dbReference type="ChEBI" id="CHEBI:18420"/>
    </ligand>
</feature>
<feature type="binding site" evidence="1">
    <location>
        <position position="343"/>
    </location>
    <ligand>
        <name>(2R)-2-phosphoglycerate</name>
        <dbReference type="ChEBI" id="CHEBI:58289"/>
    </ligand>
</feature>
<feature type="binding site" evidence="1">
    <location>
        <position position="372"/>
    </location>
    <ligand>
        <name>(2R)-2-phosphoglycerate</name>
        <dbReference type="ChEBI" id="CHEBI:58289"/>
    </ligand>
</feature>
<feature type="binding site" evidence="1">
    <location>
        <position position="373"/>
    </location>
    <ligand>
        <name>(2R)-2-phosphoglycerate</name>
        <dbReference type="ChEBI" id="CHEBI:58289"/>
    </ligand>
</feature>
<feature type="binding site" evidence="1">
    <location>
        <position position="394"/>
    </location>
    <ligand>
        <name>(2R)-2-phosphoglycerate</name>
        <dbReference type="ChEBI" id="CHEBI:58289"/>
    </ligand>
</feature>
<organism>
    <name type="scientific">Staphylococcus aureus (strain bovine RF122 / ET3-1)</name>
    <dbReference type="NCBI Taxonomy" id="273036"/>
    <lineage>
        <taxon>Bacteria</taxon>
        <taxon>Bacillati</taxon>
        <taxon>Bacillota</taxon>
        <taxon>Bacilli</taxon>
        <taxon>Bacillales</taxon>
        <taxon>Staphylococcaceae</taxon>
        <taxon>Staphylococcus</taxon>
    </lineage>
</organism>
<name>ENO_STAAB</name>
<protein>
    <recommendedName>
        <fullName evidence="1">Enolase</fullName>
        <ecNumber evidence="1">4.2.1.11</ecNumber>
    </recommendedName>
    <alternativeName>
        <fullName evidence="1">2-phospho-D-glycerate hydro-lyase</fullName>
    </alternativeName>
    <alternativeName>
        <fullName evidence="1">2-phosphoglycerate dehydratase</fullName>
    </alternativeName>
</protein>